<accession>Q59545</accession>
<feature type="chain" id="PRO_0000160885" description="D-xylulose reductase">
    <location>
        <begin position="1"/>
        <end position="338"/>
    </location>
</feature>
<feature type="binding site" evidence="1">
    <location>
        <position position="40"/>
    </location>
    <ligand>
        <name>Zn(2+)</name>
        <dbReference type="ChEBI" id="CHEBI:29105"/>
        <note>catalytic</note>
    </ligand>
</feature>
<feature type="binding site" evidence="1">
    <location>
        <position position="65"/>
    </location>
    <ligand>
        <name>Zn(2+)</name>
        <dbReference type="ChEBI" id="CHEBI:29105"/>
        <note>catalytic</note>
    </ligand>
</feature>
<feature type="binding site" evidence="1">
    <location>
        <position position="151"/>
    </location>
    <ligand>
        <name>Zn(2+)</name>
        <dbReference type="ChEBI" id="CHEBI:29105"/>
        <note>catalytic</note>
    </ligand>
</feature>
<reference key="1">
    <citation type="thesis" date="1991" institute="University of Wisconsin-Madison" country="United States">
        <title>Molecular characterization of xylitol catabolic pathways in the Enterobacteriaceae.</title>
        <authorList>
            <person name="Gallo M.A."/>
            <person name="Mortlock R.P."/>
        </authorList>
    </citation>
    <scope>NUCLEOTIDE SEQUENCE [GENOMIC DNA]</scope>
    <source>
        <strain>ATCC 25829 / DSM 6675 / NCTC 417 / M4</strain>
    </source>
</reference>
<reference key="2">
    <citation type="journal article" date="1985" name="J. Bacteriol.">
        <title>Inducible xylitol dehydrogenases in enteric bacteria.</title>
        <authorList>
            <person name="Doten R.C."/>
            <person name="Mortlock R.P."/>
        </authorList>
    </citation>
    <scope>CHARACTERIZATION</scope>
    <source>
        <strain>ATCC 25829 / DSM 6675 / NCTC 417 / M4</strain>
    </source>
</reference>
<dbReference type="EC" id="1.1.1.9"/>
<dbReference type="EMBL" id="L34345">
    <property type="protein sequence ID" value="AAA25324.1"/>
    <property type="molecule type" value="Genomic_DNA"/>
</dbReference>
<dbReference type="SMR" id="Q59545"/>
<dbReference type="STRING" id="582.AL531_10925"/>
<dbReference type="BioCyc" id="MetaCyc:MONOMER-12199"/>
<dbReference type="GO" id="GO:0046526">
    <property type="term" value="F:D-xylulose reductase activity"/>
    <property type="evidence" value="ECO:0007669"/>
    <property type="project" value="UniProtKB-EC"/>
</dbReference>
<dbReference type="GO" id="GO:0008270">
    <property type="term" value="F:zinc ion binding"/>
    <property type="evidence" value="ECO:0007669"/>
    <property type="project" value="InterPro"/>
</dbReference>
<dbReference type="CDD" id="cd05285">
    <property type="entry name" value="sorbitol_DH"/>
    <property type="match status" value="1"/>
</dbReference>
<dbReference type="Gene3D" id="3.90.180.10">
    <property type="entry name" value="Medium-chain alcohol dehydrogenases, catalytic domain"/>
    <property type="match status" value="1"/>
</dbReference>
<dbReference type="Gene3D" id="3.40.50.720">
    <property type="entry name" value="NAD(P)-binding Rossmann-like Domain"/>
    <property type="match status" value="1"/>
</dbReference>
<dbReference type="InterPro" id="IPR013149">
    <property type="entry name" value="ADH-like_C"/>
</dbReference>
<dbReference type="InterPro" id="IPR013154">
    <property type="entry name" value="ADH-like_N"/>
</dbReference>
<dbReference type="InterPro" id="IPR002328">
    <property type="entry name" value="ADH_Zn_CS"/>
</dbReference>
<dbReference type="InterPro" id="IPR011032">
    <property type="entry name" value="GroES-like_sf"/>
</dbReference>
<dbReference type="InterPro" id="IPR036291">
    <property type="entry name" value="NAD(P)-bd_dom_sf"/>
</dbReference>
<dbReference type="InterPro" id="IPR020843">
    <property type="entry name" value="PKS_ER"/>
</dbReference>
<dbReference type="InterPro" id="IPR045306">
    <property type="entry name" value="SDH-like"/>
</dbReference>
<dbReference type="PANTHER" id="PTHR43161">
    <property type="entry name" value="SORBITOL DEHYDROGENASE"/>
    <property type="match status" value="1"/>
</dbReference>
<dbReference type="PANTHER" id="PTHR43161:SF9">
    <property type="entry name" value="SORBITOL DEHYDROGENASE"/>
    <property type="match status" value="1"/>
</dbReference>
<dbReference type="Pfam" id="PF08240">
    <property type="entry name" value="ADH_N"/>
    <property type="match status" value="1"/>
</dbReference>
<dbReference type="Pfam" id="PF00107">
    <property type="entry name" value="ADH_zinc_N"/>
    <property type="match status" value="1"/>
</dbReference>
<dbReference type="SMART" id="SM00829">
    <property type="entry name" value="PKS_ER"/>
    <property type="match status" value="1"/>
</dbReference>
<dbReference type="SUPFAM" id="SSF50129">
    <property type="entry name" value="GroES-like"/>
    <property type="match status" value="1"/>
</dbReference>
<dbReference type="SUPFAM" id="SSF51735">
    <property type="entry name" value="NAD(P)-binding Rossmann-fold domains"/>
    <property type="match status" value="1"/>
</dbReference>
<dbReference type="PROSITE" id="PS00059">
    <property type="entry name" value="ADH_ZINC"/>
    <property type="match status" value="1"/>
</dbReference>
<keyword id="KW-0479">Metal-binding</keyword>
<keyword id="KW-0520">NAD</keyword>
<keyword id="KW-0560">Oxidoreductase</keyword>
<keyword id="KW-0862">Zinc</keyword>
<protein>
    <recommendedName>
        <fullName>D-xylulose reductase</fullName>
        <ecNumber>1.1.1.9</ecNumber>
    </recommendedName>
    <alternativeName>
        <fullName>Xylitol dehydrogenase</fullName>
        <shortName>XDH</shortName>
    </alternativeName>
</protein>
<evidence type="ECO:0000250" key="1"/>
<evidence type="ECO:0000305" key="2"/>
<proteinExistence type="evidence at protein level"/>
<organism>
    <name type="scientific">Morganella morganii</name>
    <name type="common">Proteus morganii</name>
    <dbReference type="NCBI Taxonomy" id="582"/>
    <lineage>
        <taxon>Bacteria</taxon>
        <taxon>Pseudomonadati</taxon>
        <taxon>Pseudomonadota</taxon>
        <taxon>Gammaproteobacteria</taxon>
        <taxon>Enterobacterales</taxon>
        <taxon>Morganellaceae</taxon>
        <taxon>Morganella</taxon>
    </lineage>
</organism>
<sequence>MIMKALVLEKAGKIAIQDWQSNEVLGDDDVEIKIHTVGICGSDVHYYQHGRIGPFVVDEPMVLGHEASGVITAAGKNVKHLKVGDRVCMEPGIPDLQSPQSRAGIYNLDPAVRFWATPPIDGCLRESVIHPAAFTFKLPDNVSFAQGAMVEPLAIGMQSATKAGIKPGDIGLVIGAGTIGIITQSALAGGCSDVIICDVFDEKLKVAEKYQGLHAVNSKDQQALADKVRELTGGEGVNVLFECSGAKPVIASISDHIAPGGTAVLVGMPIDPAPLDIVAAQAKEVTFKTILRYANMYPRTIRLLSSGKLNVAPLLSATYKFKDSVEAYERAAEPVRLM</sequence>
<comment type="catalytic activity">
    <reaction>
        <text>xylitol + NAD(+) = D-xylulose + NADH + H(+)</text>
        <dbReference type="Rhea" id="RHEA:20433"/>
        <dbReference type="ChEBI" id="CHEBI:15378"/>
        <dbReference type="ChEBI" id="CHEBI:17140"/>
        <dbReference type="ChEBI" id="CHEBI:17151"/>
        <dbReference type="ChEBI" id="CHEBI:57540"/>
        <dbReference type="ChEBI" id="CHEBI:57945"/>
        <dbReference type="EC" id="1.1.1.9"/>
    </reaction>
</comment>
<comment type="cofactor">
    <cofactor evidence="1">
        <name>Zn(2+)</name>
        <dbReference type="ChEBI" id="CHEBI:29105"/>
    </cofactor>
    <text evidence="1">Binds 1 zinc ion per subunit.</text>
</comment>
<comment type="subunit">
    <text evidence="2">Homotetramer.</text>
</comment>
<comment type="similarity">
    <text evidence="2">Belongs to the zinc-containing alcohol dehydrogenase family.</text>
</comment>
<name>XYLD_MORMO</name>